<proteinExistence type="evidence at protein level"/>
<comment type="function">
    <text evidence="1">FMRFamides and FMRFamide-like peptides are neuropeptides.</text>
</comment>
<comment type="subcellular location">
    <subcellularLocation>
        <location evidence="6">Secreted</location>
    </subcellularLocation>
</comment>
<comment type="similarity">
    <text evidence="2">Belongs to the FARP (FMRF amide related peptide) family.</text>
</comment>
<name>FAR7_AUSGA</name>
<accession>B3A0E4</accession>
<feature type="peptide" id="PRO_0000421520" description="Extended FMRFamide-7" evidence="3">
    <location>
        <begin position="1"/>
        <end position="9"/>
    </location>
</feature>
<feature type="modified residue" description="Leucine amide" evidence="3">
    <location>
        <position position="9"/>
    </location>
</feature>
<feature type="unsure residue" description="L or I" evidence="3">
    <location>
        <position position="9"/>
    </location>
</feature>
<reference evidence="5" key="1">
    <citation type="journal article" date="2012" name="Syst. Biol.">
        <title>Peptidomics-based phylogeny and biogeography of Mantophasmatodea (Hexapoda).</title>
        <authorList>
            <person name="Predel R."/>
            <person name="Neupert S."/>
            <person name="Huetteroth W."/>
            <person name="Kahnt J."/>
            <person name="Waidelich D."/>
            <person name="Roth S."/>
        </authorList>
    </citation>
    <scope>PROTEIN SEQUENCE</scope>
    <scope>AMIDATION AT LEU-9</scope>
    <source>
        <tissue evidence="3">Thoracic perisympathetic organs</tissue>
    </source>
</reference>
<evidence type="ECO:0000250" key="1">
    <source>
        <dbReference type="UniProtKB" id="P34405"/>
    </source>
</evidence>
<evidence type="ECO:0000255" key="2"/>
<evidence type="ECO:0000269" key="3">
    <source>
    </source>
</evidence>
<evidence type="ECO:0000303" key="4">
    <source>
    </source>
</evidence>
<evidence type="ECO:0000305" key="5"/>
<evidence type="ECO:0000305" key="6">
    <source>
    </source>
</evidence>
<organism>
    <name type="scientific">Austrophasma gansbaaiense</name>
    <name type="common">Gladiator</name>
    <name type="synonym">Heel-walker</name>
    <dbReference type="NCBI Taxonomy" id="253136"/>
    <lineage>
        <taxon>Eukaryota</taxon>
        <taxon>Metazoa</taxon>
        <taxon>Ecdysozoa</taxon>
        <taxon>Arthropoda</taxon>
        <taxon>Hexapoda</taxon>
        <taxon>Insecta</taxon>
        <taxon>Pterygota</taxon>
        <taxon>Neoptera</taxon>
        <taxon>Polyneoptera</taxon>
        <taxon>Mantophasmatodea</taxon>
        <taxon>Austrophasmatidae</taxon>
        <taxon>Austrophasma</taxon>
    </lineage>
</organism>
<protein>
    <recommendedName>
        <fullName evidence="4">Extended FMRFamide-7</fullName>
        <shortName evidence="4">FMRFa-7</shortName>
    </recommendedName>
</protein>
<sequence length="9" mass="1077">ARSDNFVRL</sequence>
<keyword id="KW-0027">Amidation</keyword>
<keyword id="KW-0903">Direct protein sequencing</keyword>
<keyword id="KW-0527">Neuropeptide</keyword>
<keyword id="KW-0964">Secreted</keyword>
<dbReference type="GO" id="GO:0005576">
    <property type="term" value="C:extracellular region"/>
    <property type="evidence" value="ECO:0007669"/>
    <property type="project" value="UniProtKB-SubCell"/>
</dbReference>
<dbReference type="GO" id="GO:0007218">
    <property type="term" value="P:neuropeptide signaling pathway"/>
    <property type="evidence" value="ECO:0007669"/>
    <property type="project" value="UniProtKB-KW"/>
</dbReference>